<dbReference type="EC" id="2.4.2.18" evidence="1"/>
<dbReference type="EMBL" id="CP000557">
    <property type="protein sequence ID" value="ABO67489.1"/>
    <property type="molecule type" value="Genomic_DNA"/>
</dbReference>
<dbReference type="RefSeq" id="WP_008879611.1">
    <property type="nucleotide sequence ID" value="NC_009328.1"/>
</dbReference>
<dbReference type="SMR" id="A4IQ85"/>
<dbReference type="GeneID" id="87623763"/>
<dbReference type="KEGG" id="gtn:GTNG_2137"/>
<dbReference type="eggNOG" id="COG0547">
    <property type="taxonomic scope" value="Bacteria"/>
</dbReference>
<dbReference type="HOGENOM" id="CLU_034315_2_1_9"/>
<dbReference type="UniPathway" id="UPA00035">
    <property type="reaction ID" value="UER00041"/>
</dbReference>
<dbReference type="Proteomes" id="UP000001578">
    <property type="component" value="Chromosome"/>
</dbReference>
<dbReference type="GO" id="GO:0005829">
    <property type="term" value="C:cytosol"/>
    <property type="evidence" value="ECO:0007669"/>
    <property type="project" value="TreeGrafter"/>
</dbReference>
<dbReference type="GO" id="GO:0004048">
    <property type="term" value="F:anthranilate phosphoribosyltransferase activity"/>
    <property type="evidence" value="ECO:0007669"/>
    <property type="project" value="UniProtKB-UniRule"/>
</dbReference>
<dbReference type="GO" id="GO:0000287">
    <property type="term" value="F:magnesium ion binding"/>
    <property type="evidence" value="ECO:0007669"/>
    <property type="project" value="UniProtKB-UniRule"/>
</dbReference>
<dbReference type="GO" id="GO:0000162">
    <property type="term" value="P:L-tryptophan biosynthetic process"/>
    <property type="evidence" value="ECO:0007669"/>
    <property type="project" value="UniProtKB-UniRule"/>
</dbReference>
<dbReference type="FunFam" id="3.40.1030.10:FF:000002">
    <property type="entry name" value="Anthranilate phosphoribosyltransferase"/>
    <property type="match status" value="1"/>
</dbReference>
<dbReference type="Gene3D" id="3.40.1030.10">
    <property type="entry name" value="Nucleoside phosphorylase/phosphoribosyltransferase catalytic domain"/>
    <property type="match status" value="1"/>
</dbReference>
<dbReference type="Gene3D" id="1.20.970.10">
    <property type="entry name" value="Transferase, Pyrimidine Nucleoside Phosphorylase, Chain C"/>
    <property type="match status" value="1"/>
</dbReference>
<dbReference type="HAMAP" id="MF_00211">
    <property type="entry name" value="TrpD"/>
    <property type="match status" value="1"/>
</dbReference>
<dbReference type="InterPro" id="IPR005940">
    <property type="entry name" value="Anthranilate_Pribosyl_Tfrase"/>
</dbReference>
<dbReference type="InterPro" id="IPR000312">
    <property type="entry name" value="Glycosyl_Trfase_fam3"/>
</dbReference>
<dbReference type="InterPro" id="IPR017459">
    <property type="entry name" value="Glycosyl_Trfase_fam3_N_dom"/>
</dbReference>
<dbReference type="InterPro" id="IPR036320">
    <property type="entry name" value="Glycosyl_Trfase_fam3_N_dom_sf"/>
</dbReference>
<dbReference type="InterPro" id="IPR035902">
    <property type="entry name" value="Nuc_phospho_transferase"/>
</dbReference>
<dbReference type="NCBIfam" id="TIGR01245">
    <property type="entry name" value="trpD"/>
    <property type="match status" value="1"/>
</dbReference>
<dbReference type="PANTHER" id="PTHR43285">
    <property type="entry name" value="ANTHRANILATE PHOSPHORIBOSYLTRANSFERASE"/>
    <property type="match status" value="1"/>
</dbReference>
<dbReference type="PANTHER" id="PTHR43285:SF2">
    <property type="entry name" value="ANTHRANILATE PHOSPHORIBOSYLTRANSFERASE"/>
    <property type="match status" value="1"/>
</dbReference>
<dbReference type="Pfam" id="PF02885">
    <property type="entry name" value="Glycos_trans_3N"/>
    <property type="match status" value="1"/>
</dbReference>
<dbReference type="Pfam" id="PF00591">
    <property type="entry name" value="Glycos_transf_3"/>
    <property type="match status" value="1"/>
</dbReference>
<dbReference type="SUPFAM" id="SSF52418">
    <property type="entry name" value="Nucleoside phosphorylase/phosphoribosyltransferase catalytic domain"/>
    <property type="match status" value="1"/>
</dbReference>
<dbReference type="SUPFAM" id="SSF47648">
    <property type="entry name" value="Nucleoside phosphorylase/phosphoribosyltransferase N-terminal domain"/>
    <property type="match status" value="1"/>
</dbReference>
<name>TRPD_GEOTN</name>
<keyword id="KW-0028">Amino-acid biosynthesis</keyword>
<keyword id="KW-0057">Aromatic amino acid biosynthesis</keyword>
<keyword id="KW-0328">Glycosyltransferase</keyword>
<keyword id="KW-0460">Magnesium</keyword>
<keyword id="KW-0479">Metal-binding</keyword>
<keyword id="KW-0808">Transferase</keyword>
<keyword id="KW-0822">Tryptophan biosynthesis</keyword>
<comment type="function">
    <text evidence="1">Catalyzes the transfer of the phosphoribosyl group of 5-phosphorylribose-1-pyrophosphate (PRPP) to anthranilate to yield N-(5'-phosphoribosyl)-anthranilate (PRA).</text>
</comment>
<comment type="catalytic activity">
    <reaction evidence="1">
        <text>N-(5-phospho-beta-D-ribosyl)anthranilate + diphosphate = 5-phospho-alpha-D-ribose 1-diphosphate + anthranilate</text>
        <dbReference type="Rhea" id="RHEA:11768"/>
        <dbReference type="ChEBI" id="CHEBI:16567"/>
        <dbReference type="ChEBI" id="CHEBI:18277"/>
        <dbReference type="ChEBI" id="CHEBI:33019"/>
        <dbReference type="ChEBI" id="CHEBI:58017"/>
        <dbReference type="EC" id="2.4.2.18"/>
    </reaction>
</comment>
<comment type="cofactor">
    <cofactor evidence="1">
        <name>Mg(2+)</name>
        <dbReference type="ChEBI" id="CHEBI:18420"/>
    </cofactor>
    <text evidence="1">Binds 2 magnesium ions per monomer.</text>
</comment>
<comment type="pathway">
    <text evidence="1">Amino-acid biosynthesis; L-tryptophan biosynthesis; L-tryptophan from chorismate: step 2/5.</text>
</comment>
<comment type="subunit">
    <text evidence="1">Homodimer.</text>
</comment>
<comment type="similarity">
    <text evidence="1">Belongs to the anthranilate phosphoribosyltransferase family.</text>
</comment>
<feature type="chain" id="PRO_1000043009" description="Anthranilate phosphoribosyltransferase">
    <location>
        <begin position="1"/>
        <end position="339"/>
    </location>
</feature>
<feature type="binding site" evidence="1">
    <location>
        <position position="79"/>
    </location>
    <ligand>
        <name>5-phospho-alpha-D-ribose 1-diphosphate</name>
        <dbReference type="ChEBI" id="CHEBI:58017"/>
    </ligand>
</feature>
<feature type="binding site" evidence="1">
    <location>
        <position position="79"/>
    </location>
    <ligand>
        <name>anthranilate</name>
        <dbReference type="ChEBI" id="CHEBI:16567"/>
        <label>1</label>
    </ligand>
</feature>
<feature type="binding site" evidence="1">
    <location>
        <begin position="82"/>
        <end position="83"/>
    </location>
    <ligand>
        <name>5-phospho-alpha-D-ribose 1-diphosphate</name>
        <dbReference type="ChEBI" id="CHEBI:58017"/>
    </ligand>
</feature>
<feature type="binding site" evidence="1">
    <location>
        <position position="87"/>
    </location>
    <ligand>
        <name>5-phospho-alpha-D-ribose 1-diphosphate</name>
        <dbReference type="ChEBI" id="CHEBI:58017"/>
    </ligand>
</feature>
<feature type="binding site" evidence="1">
    <location>
        <begin position="89"/>
        <end position="92"/>
    </location>
    <ligand>
        <name>5-phospho-alpha-D-ribose 1-diphosphate</name>
        <dbReference type="ChEBI" id="CHEBI:58017"/>
    </ligand>
</feature>
<feature type="binding site" evidence="1">
    <location>
        <position position="91"/>
    </location>
    <ligand>
        <name>Mg(2+)</name>
        <dbReference type="ChEBI" id="CHEBI:18420"/>
        <label>1</label>
    </ligand>
</feature>
<feature type="binding site" evidence="1">
    <location>
        <begin position="107"/>
        <end position="115"/>
    </location>
    <ligand>
        <name>5-phospho-alpha-D-ribose 1-diphosphate</name>
        <dbReference type="ChEBI" id="CHEBI:58017"/>
    </ligand>
</feature>
<feature type="binding site" evidence="1">
    <location>
        <position position="110"/>
    </location>
    <ligand>
        <name>anthranilate</name>
        <dbReference type="ChEBI" id="CHEBI:16567"/>
        <label>1</label>
    </ligand>
</feature>
<feature type="binding site" evidence="1">
    <location>
        <position position="119"/>
    </location>
    <ligand>
        <name>5-phospho-alpha-D-ribose 1-diphosphate</name>
        <dbReference type="ChEBI" id="CHEBI:58017"/>
    </ligand>
</feature>
<feature type="binding site" evidence="1">
    <location>
        <position position="165"/>
    </location>
    <ligand>
        <name>anthranilate</name>
        <dbReference type="ChEBI" id="CHEBI:16567"/>
        <label>2</label>
    </ligand>
</feature>
<feature type="binding site" evidence="1">
    <location>
        <position position="224"/>
    </location>
    <ligand>
        <name>Mg(2+)</name>
        <dbReference type="ChEBI" id="CHEBI:18420"/>
        <label>2</label>
    </ligand>
</feature>
<feature type="binding site" evidence="1">
    <location>
        <position position="225"/>
    </location>
    <ligand>
        <name>Mg(2+)</name>
        <dbReference type="ChEBI" id="CHEBI:18420"/>
        <label>1</label>
    </ligand>
</feature>
<feature type="binding site" evidence="1">
    <location>
        <position position="225"/>
    </location>
    <ligand>
        <name>Mg(2+)</name>
        <dbReference type="ChEBI" id="CHEBI:18420"/>
        <label>2</label>
    </ligand>
</feature>
<reference key="1">
    <citation type="journal article" date="2007" name="Proc. Natl. Acad. Sci. U.S.A.">
        <title>Genome and proteome of long-chain alkane degrading Geobacillus thermodenitrificans NG80-2 isolated from a deep-subsurface oil reservoir.</title>
        <authorList>
            <person name="Feng L."/>
            <person name="Wang W."/>
            <person name="Cheng J."/>
            <person name="Ren Y."/>
            <person name="Zhao G."/>
            <person name="Gao C."/>
            <person name="Tang Y."/>
            <person name="Liu X."/>
            <person name="Han W."/>
            <person name="Peng X."/>
            <person name="Liu R."/>
            <person name="Wang L."/>
        </authorList>
    </citation>
    <scope>NUCLEOTIDE SEQUENCE [LARGE SCALE GENOMIC DNA]</scope>
    <source>
        <strain>NG80-2</strain>
    </source>
</reference>
<organism>
    <name type="scientific">Geobacillus thermodenitrificans (strain NG80-2)</name>
    <dbReference type="NCBI Taxonomy" id="420246"/>
    <lineage>
        <taxon>Bacteria</taxon>
        <taxon>Bacillati</taxon>
        <taxon>Bacillota</taxon>
        <taxon>Bacilli</taxon>
        <taxon>Bacillales</taxon>
        <taxon>Anoxybacillaceae</taxon>
        <taxon>Geobacillus</taxon>
    </lineage>
</organism>
<protein>
    <recommendedName>
        <fullName evidence="1">Anthranilate phosphoribosyltransferase</fullName>
        <ecNumber evidence="1">2.4.2.18</ecNumber>
    </recommendedName>
</protein>
<sequence length="339" mass="36032">MLKRLLSKCAEGKTLTEEEAYEAMATVMDGAATDSQIASLLSMLCLRGETVDELTGFVRAMRDRMMAIDAGDDVIDTCGTGGDGAATFNISTAAAIVISSLGVKVAKHGNRAVSSKSGSADVLERLGINIQSSPDAAKEALETNGLTFLYAPLYHTAMKHAAGPRKEIGFRTVFNLIGPLANPARCKRQVVGVYSTRYAEKLAETMRRLGSEHVLFVTGRDGLDECSIATETDVVELKDGAIRRFVITPEEVGLPRGELADVQVHNPEESAALLEAVMTVTAPESAVNIVALNAGVALYAAGKTKTIADGVTMAKDAILSNAAYRQLQRLRAKEVVRDA</sequence>
<evidence type="ECO:0000255" key="1">
    <source>
        <dbReference type="HAMAP-Rule" id="MF_00211"/>
    </source>
</evidence>
<proteinExistence type="inferred from homology"/>
<accession>A4IQ85</accession>
<gene>
    <name evidence="1" type="primary">trpD</name>
    <name type="ordered locus">GTNG_2137</name>
</gene>